<accession>P09658</accession>
<comment type="function">
    <text evidence="1">RuBisCO catalyzes two reactions: the carboxylation of D-ribulose 1,5-bisphosphate, the primary event in carbon dioxide fixation, as well as the oxidative fragmentation of the pentose substrate. Both reactions occur simultaneously and in competition at the same active site. Although the small subunit is not catalytic it is essential for maximal activity.</text>
</comment>
<comment type="subunit">
    <text evidence="1 2">Heterohexadecamer of 8 large and 8 small subunits.</text>
</comment>
<comment type="miscellaneous">
    <text evidence="1 2">The basic functional RuBisCO is composed of a large chain homodimer in a 'head-to-tail' conformation. In form I RuBisCO this homodimer is arranged in a barrel-like tetramer with the small subunits forming a tetrameric 'cap' on each end of the 'barrel'.</text>
</comment>
<comment type="similarity">
    <text evidence="1">Belongs to the RuBisCO small chain family.</text>
</comment>
<protein>
    <recommendedName>
        <fullName evidence="3">Ribulose bisphosphate carboxylase small subunit, chromosomal</fullName>
        <shortName evidence="1">RuBisCO small subunit</shortName>
    </recommendedName>
</protein>
<feature type="chain" id="PRO_0000198607" description="Ribulose bisphosphate carboxylase small subunit, chromosomal">
    <location>
        <begin position="1"/>
        <end position="139"/>
    </location>
</feature>
<feature type="turn" evidence="4">
    <location>
        <begin position="8"/>
        <end position="10"/>
    </location>
</feature>
<feature type="helix" evidence="4">
    <location>
        <begin position="16"/>
        <end position="28"/>
    </location>
</feature>
<feature type="strand" evidence="4">
    <location>
        <begin position="32"/>
        <end position="39"/>
    </location>
</feature>
<feature type="strand" evidence="4">
    <location>
        <begin position="49"/>
        <end position="53"/>
    </location>
</feature>
<feature type="helix" evidence="4">
    <location>
        <begin position="61"/>
        <end position="74"/>
    </location>
</feature>
<feature type="strand" evidence="4">
    <location>
        <begin position="76"/>
        <end position="85"/>
    </location>
</feature>
<feature type="turn" evidence="4">
    <location>
        <begin position="87"/>
        <end position="89"/>
    </location>
</feature>
<feature type="strand" evidence="4">
    <location>
        <begin position="92"/>
        <end position="97"/>
    </location>
</feature>
<feature type="helix" evidence="4">
    <location>
        <begin position="102"/>
        <end position="104"/>
    </location>
</feature>
<feature type="strand" evidence="4">
    <location>
        <begin position="110"/>
        <end position="115"/>
    </location>
</feature>
<feature type="strand" evidence="4">
    <location>
        <begin position="121"/>
        <end position="126"/>
    </location>
</feature>
<reference key="1">
    <citation type="journal article" date="1987" name="J. Bacteriol.">
        <title>Sequence analysis of the Alcaligenes eutrophus chromosomally encoded ribulose bisphosphate carboxylase large and small subunit genes and their gene products.</title>
        <authorList>
            <person name="Andersen K."/>
            <person name="Caton J."/>
        </authorList>
    </citation>
    <scope>NUCLEOTIDE SEQUENCE [GENOMIC DNA]</scope>
    <source>
        <strain>ATCC 17707 / LMG 1207 / Stanier 345 / H-20-R</strain>
    </source>
</reference>
<reference key="2">
    <citation type="submission" date="1998-08" db="EMBL/GenBank/DDBJ databases">
        <authorList>
            <person name="Andersen K."/>
        </authorList>
    </citation>
    <scope>SEQUENCE REVISION</scope>
</reference>
<reference key="3">
    <citation type="journal article" date="1999" name="J. Mol. Biol.">
        <title>The crystal structure of rubisco from Alcaligenes eutrophus reveals a novel central eight-stranded beta-barrel formed by beta-strands from four subunits.</title>
        <authorList>
            <person name="Hansen S."/>
            <person name="Vollan V.B."/>
            <person name="Hough E."/>
            <person name="Andersen K."/>
        </authorList>
    </citation>
    <scope>X-RAY CRYSTALLOGRAPHY (2.7 ANGSTROMS) OF 1-129 OF UNACTIVATED HOLOENYZYME</scope>
    <scope>SUBUNIT</scope>
    <source>
        <strain>ATCC 17707 / LMG 1207 / Stanier 345 / H-20-R</strain>
    </source>
</reference>
<organism>
    <name type="scientific">Cupriavidus necator</name>
    <name type="common">Alcaligenes eutrophus</name>
    <name type="synonym">Ralstonia eutropha</name>
    <dbReference type="NCBI Taxonomy" id="106590"/>
    <lineage>
        <taxon>Bacteria</taxon>
        <taxon>Pseudomonadati</taxon>
        <taxon>Pseudomonadota</taxon>
        <taxon>Betaproteobacteria</taxon>
        <taxon>Burkholderiales</taxon>
        <taxon>Burkholderiaceae</taxon>
        <taxon>Cupriavidus</taxon>
    </lineage>
</organism>
<gene>
    <name evidence="1" type="primary">cbbS</name>
    <name type="synonym">cbxSC</name>
    <name type="synonym">cfxSC</name>
    <name evidence="3" type="synonym">rbcS</name>
</gene>
<keyword id="KW-0002">3D-structure</keyword>
<keyword id="KW-0113">Calvin cycle</keyword>
<keyword id="KW-0120">Carbon dioxide fixation</keyword>
<name>RBSC_CUPNE</name>
<proteinExistence type="evidence at protein level"/>
<dbReference type="EMBL" id="M17744">
    <property type="protein sequence ID" value="AAC28130.1"/>
    <property type="molecule type" value="Genomic_DNA"/>
</dbReference>
<dbReference type="PIR" id="B26954">
    <property type="entry name" value="RKALSE"/>
</dbReference>
<dbReference type="PDB" id="1BXN">
    <property type="method" value="X-ray"/>
    <property type="resolution" value="2.70 A"/>
    <property type="chains" value="I/J/K/L=1-139"/>
</dbReference>
<dbReference type="PDBsum" id="1BXN"/>
<dbReference type="SMR" id="P09658"/>
<dbReference type="DIP" id="DIP-6120N"/>
<dbReference type="EvolutionaryTrace" id="P09658"/>
<dbReference type="GO" id="GO:0016984">
    <property type="term" value="F:ribulose-bisphosphate carboxylase activity"/>
    <property type="evidence" value="ECO:0007669"/>
    <property type="project" value="UniProtKB-UniRule"/>
</dbReference>
<dbReference type="GO" id="GO:0019253">
    <property type="term" value="P:reductive pentose-phosphate cycle"/>
    <property type="evidence" value="ECO:0007669"/>
    <property type="project" value="UniProtKB-UniRule"/>
</dbReference>
<dbReference type="CDD" id="cd03527">
    <property type="entry name" value="RuBisCO_small"/>
    <property type="match status" value="1"/>
</dbReference>
<dbReference type="Gene3D" id="3.30.190.10">
    <property type="entry name" value="Ribulose bisphosphate carboxylase, small subunit"/>
    <property type="match status" value="1"/>
</dbReference>
<dbReference type="HAMAP" id="MF_00859">
    <property type="entry name" value="RuBisCO_S_bact"/>
    <property type="match status" value="1"/>
</dbReference>
<dbReference type="InterPro" id="IPR024681">
    <property type="entry name" value="RuBisCO_ssu"/>
</dbReference>
<dbReference type="InterPro" id="IPR000894">
    <property type="entry name" value="RuBisCO_ssu_dom"/>
</dbReference>
<dbReference type="InterPro" id="IPR036385">
    <property type="entry name" value="RuBisCO_ssu_sf"/>
</dbReference>
<dbReference type="PANTHER" id="PTHR31262">
    <property type="entry name" value="RIBULOSE BISPHOSPHATE CARBOXYLASE SMALL CHAIN 1, CHLOROPLASTIC"/>
    <property type="match status" value="1"/>
</dbReference>
<dbReference type="PANTHER" id="PTHR31262:SF23">
    <property type="entry name" value="RIBULOSE BISPHOSPHATE CARBOXYLASE SMALL SUBUNIT"/>
    <property type="match status" value="1"/>
</dbReference>
<dbReference type="Pfam" id="PF00101">
    <property type="entry name" value="RuBisCO_small"/>
    <property type="match status" value="1"/>
</dbReference>
<dbReference type="SMART" id="SM00961">
    <property type="entry name" value="RuBisCO_small"/>
    <property type="match status" value="1"/>
</dbReference>
<dbReference type="SUPFAM" id="SSF55239">
    <property type="entry name" value="RuBisCO, small subunit"/>
    <property type="match status" value="1"/>
</dbReference>
<sequence length="139" mass="16143">MRITQGTFSFLPELTDEQITKQLEYCLNQGWAVGLEYTDDPHPRNTYWEMFGLPMFDLRDAAGILMEINNARNTFPNHYIRVTAFDSTHTVESVVMSFIVNRPADEPGFRLVRQEEPGRTLRYSIESYAVQARPEGSRY</sequence>
<evidence type="ECO:0000255" key="1">
    <source>
        <dbReference type="HAMAP-Rule" id="MF_00859"/>
    </source>
</evidence>
<evidence type="ECO:0000269" key="2">
    <source>
    </source>
</evidence>
<evidence type="ECO:0000303" key="3">
    <source>
    </source>
</evidence>
<evidence type="ECO:0007829" key="4">
    <source>
        <dbReference type="PDB" id="1BXN"/>
    </source>
</evidence>